<reference key="1">
    <citation type="journal article" date="2001" name="J. Neurosci.">
        <title>Cloning, expression, and regulation of a glucocorticoid-induced receptor in rat brain: effect of repetitive amphetamine.</title>
        <authorList>
            <person name="Wang D."/>
            <person name="Herman J.P."/>
            <person name="Pritchard L.M."/>
            <person name="Spitzer R.H."/>
            <person name="Ahlbrand R.L."/>
            <person name="Kramer G.L."/>
            <person name="Petty F."/>
            <person name="Sallee F.R."/>
            <person name="Richtand N.M."/>
        </authorList>
    </citation>
    <scope>NUCLEOTIDE SEQUENCE [MRNA]</scope>
    <scope>TISSUE SPECIFICITY</scope>
    <scope>INDUCTION</scope>
    <source>
        <strain>Sprague-Dawley</strain>
    </source>
</reference>
<reference key="2">
    <citation type="journal article" date="2004" name="Nature">
        <title>Genome sequence of the Brown Norway rat yields insights into mammalian evolution.</title>
        <authorList>
            <person name="Gibbs R.A."/>
            <person name="Weinstock G.M."/>
            <person name="Metzker M.L."/>
            <person name="Muzny D.M."/>
            <person name="Sodergren E.J."/>
            <person name="Scherer S."/>
            <person name="Scott G."/>
            <person name="Steffen D."/>
            <person name="Worley K.C."/>
            <person name="Burch P.E."/>
            <person name="Okwuonu G."/>
            <person name="Hines S."/>
            <person name="Lewis L."/>
            <person name="Deramo C."/>
            <person name="Delgado O."/>
            <person name="Dugan-Rocha S."/>
            <person name="Miner G."/>
            <person name="Morgan M."/>
            <person name="Hawes A."/>
            <person name="Gill R."/>
            <person name="Holt R.A."/>
            <person name="Adams M.D."/>
            <person name="Amanatides P.G."/>
            <person name="Baden-Tillson H."/>
            <person name="Barnstead M."/>
            <person name="Chin S."/>
            <person name="Evans C.A."/>
            <person name="Ferriera S."/>
            <person name="Fosler C."/>
            <person name="Glodek A."/>
            <person name="Gu Z."/>
            <person name="Jennings D."/>
            <person name="Kraft C.L."/>
            <person name="Nguyen T."/>
            <person name="Pfannkoch C.M."/>
            <person name="Sitter C."/>
            <person name="Sutton G.G."/>
            <person name="Venter J.C."/>
            <person name="Woodage T."/>
            <person name="Smith D."/>
            <person name="Lee H.-M."/>
            <person name="Gustafson E."/>
            <person name="Cahill P."/>
            <person name="Kana A."/>
            <person name="Doucette-Stamm L."/>
            <person name="Weinstock K."/>
            <person name="Fechtel K."/>
            <person name="Weiss R.B."/>
            <person name="Dunn D.M."/>
            <person name="Green E.D."/>
            <person name="Blakesley R.W."/>
            <person name="Bouffard G.G."/>
            <person name="De Jong P.J."/>
            <person name="Osoegawa K."/>
            <person name="Zhu B."/>
            <person name="Marra M."/>
            <person name="Schein J."/>
            <person name="Bosdet I."/>
            <person name="Fjell C."/>
            <person name="Jones S."/>
            <person name="Krzywinski M."/>
            <person name="Mathewson C."/>
            <person name="Siddiqui A."/>
            <person name="Wye N."/>
            <person name="McPherson J."/>
            <person name="Zhao S."/>
            <person name="Fraser C.M."/>
            <person name="Shetty J."/>
            <person name="Shatsman S."/>
            <person name="Geer K."/>
            <person name="Chen Y."/>
            <person name="Abramzon S."/>
            <person name="Nierman W.C."/>
            <person name="Havlak P.H."/>
            <person name="Chen R."/>
            <person name="Durbin K.J."/>
            <person name="Egan A."/>
            <person name="Ren Y."/>
            <person name="Song X.-Z."/>
            <person name="Li B."/>
            <person name="Liu Y."/>
            <person name="Qin X."/>
            <person name="Cawley S."/>
            <person name="Cooney A.J."/>
            <person name="D'Souza L.M."/>
            <person name="Martin K."/>
            <person name="Wu J.Q."/>
            <person name="Gonzalez-Garay M.L."/>
            <person name="Jackson A.R."/>
            <person name="Kalafus K.J."/>
            <person name="McLeod M.P."/>
            <person name="Milosavljevic A."/>
            <person name="Virk D."/>
            <person name="Volkov A."/>
            <person name="Wheeler D.A."/>
            <person name="Zhang Z."/>
            <person name="Bailey J.A."/>
            <person name="Eichler E.E."/>
            <person name="Tuzun E."/>
            <person name="Birney E."/>
            <person name="Mongin E."/>
            <person name="Ureta-Vidal A."/>
            <person name="Woodwark C."/>
            <person name="Zdobnov E."/>
            <person name="Bork P."/>
            <person name="Suyama M."/>
            <person name="Torrents D."/>
            <person name="Alexandersson M."/>
            <person name="Trask B.J."/>
            <person name="Young J.M."/>
            <person name="Huang H."/>
            <person name="Wang H."/>
            <person name="Xing H."/>
            <person name="Daniels S."/>
            <person name="Gietzen D."/>
            <person name="Schmidt J."/>
            <person name="Stevens K."/>
            <person name="Vitt U."/>
            <person name="Wingrove J."/>
            <person name="Camara F."/>
            <person name="Mar Alba M."/>
            <person name="Abril J.F."/>
            <person name="Guigo R."/>
            <person name="Smit A."/>
            <person name="Dubchak I."/>
            <person name="Rubin E.M."/>
            <person name="Couronne O."/>
            <person name="Poliakov A."/>
            <person name="Huebner N."/>
            <person name="Ganten D."/>
            <person name="Goesele C."/>
            <person name="Hummel O."/>
            <person name="Kreitler T."/>
            <person name="Lee Y.-A."/>
            <person name="Monti J."/>
            <person name="Schulz H."/>
            <person name="Zimdahl H."/>
            <person name="Himmelbauer H."/>
            <person name="Lehrach H."/>
            <person name="Jacob H.J."/>
            <person name="Bromberg S."/>
            <person name="Gullings-Handley J."/>
            <person name="Jensen-Seaman M.I."/>
            <person name="Kwitek A.E."/>
            <person name="Lazar J."/>
            <person name="Pasko D."/>
            <person name="Tonellato P.J."/>
            <person name="Twigger S."/>
            <person name="Ponting C.P."/>
            <person name="Duarte J.M."/>
            <person name="Rice S."/>
            <person name="Goodstadt L."/>
            <person name="Beatson S.A."/>
            <person name="Emes R.D."/>
            <person name="Winter E.E."/>
            <person name="Webber C."/>
            <person name="Brandt P."/>
            <person name="Nyakatura G."/>
            <person name="Adetobi M."/>
            <person name="Chiaromonte F."/>
            <person name="Elnitski L."/>
            <person name="Eswara P."/>
            <person name="Hardison R.C."/>
            <person name="Hou M."/>
            <person name="Kolbe D."/>
            <person name="Makova K."/>
            <person name="Miller W."/>
            <person name="Nekrutenko A."/>
            <person name="Riemer C."/>
            <person name="Schwartz S."/>
            <person name="Taylor J."/>
            <person name="Yang S."/>
            <person name="Zhang Y."/>
            <person name="Lindpaintner K."/>
            <person name="Andrews T.D."/>
            <person name="Caccamo M."/>
            <person name="Clamp M."/>
            <person name="Clarke L."/>
            <person name="Curwen V."/>
            <person name="Durbin R.M."/>
            <person name="Eyras E."/>
            <person name="Searle S.M."/>
            <person name="Cooper G.M."/>
            <person name="Batzoglou S."/>
            <person name="Brudno M."/>
            <person name="Sidow A."/>
            <person name="Stone E.A."/>
            <person name="Payseur B.A."/>
            <person name="Bourque G."/>
            <person name="Lopez-Otin C."/>
            <person name="Puente X.S."/>
            <person name="Chakrabarti K."/>
            <person name="Chatterji S."/>
            <person name="Dewey C."/>
            <person name="Pachter L."/>
            <person name="Bray N."/>
            <person name="Yap V.B."/>
            <person name="Caspi A."/>
            <person name="Tesler G."/>
            <person name="Pevzner P.A."/>
            <person name="Haussler D."/>
            <person name="Roskin K.M."/>
            <person name="Baertsch R."/>
            <person name="Clawson H."/>
            <person name="Furey T.S."/>
            <person name="Hinrichs A.S."/>
            <person name="Karolchik D."/>
            <person name="Kent W.J."/>
            <person name="Rosenbloom K.R."/>
            <person name="Trumbower H."/>
            <person name="Weirauch M."/>
            <person name="Cooper D.N."/>
            <person name="Stenson P.D."/>
            <person name="Ma B."/>
            <person name="Brent M."/>
            <person name="Arumugam M."/>
            <person name="Shteynberg D."/>
            <person name="Copley R.R."/>
            <person name="Taylor M.S."/>
            <person name="Riethman H."/>
            <person name="Mudunuri U."/>
            <person name="Peterson J."/>
            <person name="Guyer M."/>
            <person name="Felsenfeld A."/>
            <person name="Old S."/>
            <person name="Mockrin S."/>
            <person name="Collins F.S."/>
        </authorList>
    </citation>
    <scope>NUCLEOTIDE SEQUENCE [LARGE SCALE GENOMIC DNA]</scope>
    <source>
        <strain>Brown Norway</strain>
    </source>
</reference>
<reference key="3">
    <citation type="submission" date="2005-09" db="EMBL/GenBank/DDBJ databases">
        <authorList>
            <person name="Mural R.J."/>
            <person name="Adams M.D."/>
            <person name="Myers E.W."/>
            <person name="Smith H.O."/>
            <person name="Venter J.C."/>
        </authorList>
    </citation>
    <scope>NUCLEOTIDE SEQUENCE [LARGE SCALE GENOMIC DNA]</scope>
</reference>
<reference key="4">
    <citation type="journal article" date="2007" name="Peptides">
        <title>Interaction of NPY compounds with the rat glucocorticoid-induced receptor (GIR) reveals similarity to the NPY-Y2 receptor.</title>
        <authorList>
            <person name="Sah R."/>
            <person name="Parker S.L."/>
            <person name="Sheriff S."/>
            <person name="Eaton K."/>
            <person name="Balasubramaniam A."/>
            <person name="Sallee F.R."/>
        </authorList>
    </citation>
    <scope>CAUTION</scope>
</reference>
<sequence>MNVPPVLLLFLLSSVRATEQPQVVTEHPSMDAALTGANASHFWANYTFSDWQNFVGRRRYGAESQNPTVKALLIVAYSFIIVFSLFGNVLVCHVIFKNQRMHSATSLFIVNLAVADIMITLLNTPFTLVRFVNSTWVFGKGMCHVSRFAQYCSLHVSALTLTAIAVDRHQVIMHPLKPRISITKGVIYIAVIWVMATFFSLPHAICQKLFTFKYSEDIVRSLCLPDFPEPADLFWKYLDLATFILLYLLPLFIISVAYARVAKKLWLCNTIGDVTTEQYLALRRKKKTTVKMLVLVVVLFALCWFPLNCYVLLLSSKAIHTNNALYFAFHWFAMSSTCYNPFIYCWLNENFRVELKALLSMCQRPSKPQEDRLPSPVPSFRVAWTEKSHGRRALLANHHLPSSQIQSGKTDLSSVEPTVAVS</sequence>
<protein>
    <recommendedName>
        <fullName>G-protein coupled receptor 83</fullName>
    </recommendedName>
    <alternativeName>
        <fullName evidence="8">Glucocorticoid-induced receptor</fullName>
    </alternativeName>
</protein>
<feature type="signal peptide" evidence="2">
    <location>
        <begin position="1"/>
        <end position="17"/>
    </location>
</feature>
<feature type="chain" id="PRO_5014107612" description="G-protein coupled receptor 83" evidence="2">
    <location>
        <begin position="18"/>
        <end position="422"/>
    </location>
</feature>
<feature type="topological domain" description="Extracellular" evidence="10">
    <location>
        <begin position="18"/>
        <end position="70"/>
    </location>
</feature>
<feature type="transmembrane region" description="Helical; Name=1" evidence="2">
    <location>
        <begin position="71"/>
        <end position="91"/>
    </location>
</feature>
<feature type="topological domain" description="Cytoplasmic" evidence="10">
    <location>
        <begin position="92"/>
        <end position="106"/>
    </location>
</feature>
<feature type="transmembrane region" description="Helical; Name=2" evidence="2">
    <location>
        <begin position="107"/>
        <end position="127"/>
    </location>
</feature>
<feature type="topological domain" description="Extracellular" evidence="10">
    <location>
        <begin position="128"/>
        <end position="143"/>
    </location>
</feature>
<feature type="transmembrane region" description="Helical; Name=3" evidence="2">
    <location>
        <begin position="144"/>
        <end position="166"/>
    </location>
</feature>
<feature type="topological domain" description="Cytoplasmic" evidence="10">
    <location>
        <begin position="167"/>
        <end position="184"/>
    </location>
</feature>
<feature type="transmembrane region" description="Helical; Name=4" evidence="2">
    <location>
        <begin position="185"/>
        <end position="205"/>
    </location>
</feature>
<feature type="topological domain" description="Extracellular" evidence="10">
    <location>
        <begin position="206"/>
        <end position="236"/>
    </location>
</feature>
<feature type="transmembrane region" description="Helical; Name=5" evidence="2">
    <location>
        <begin position="237"/>
        <end position="257"/>
    </location>
</feature>
<feature type="topological domain" description="Cytoplasmic" evidence="10">
    <location>
        <begin position="258"/>
        <end position="292"/>
    </location>
</feature>
<feature type="transmembrane region" description="Helical; Name=6" evidence="2">
    <location>
        <begin position="293"/>
        <end position="313"/>
    </location>
</feature>
<feature type="topological domain" description="Extracellular" evidence="10">
    <location>
        <begin position="314"/>
        <end position="326"/>
    </location>
</feature>
<feature type="transmembrane region" description="Helical; Name=7" evidence="2">
    <location>
        <begin position="327"/>
        <end position="347"/>
    </location>
</feature>
<feature type="topological domain" description="Cytoplasmic" evidence="10">
    <location>
        <begin position="348"/>
        <end position="422"/>
    </location>
</feature>
<feature type="region of interest" description="Disordered" evidence="5">
    <location>
        <begin position="401"/>
        <end position="422"/>
    </location>
</feature>
<feature type="disulfide bond" evidence="3">
    <location>
        <begin position="143"/>
        <end position="223"/>
    </location>
</feature>
<evidence type="ECO:0000250" key="1">
    <source>
        <dbReference type="UniProtKB" id="P30731"/>
    </source>
</evidence>
<evidence type="ECO:0000255" key="2"/>
<evidence type="ECO:0000255" key="3">
    <source>
        <dbReference type="PROSITE-ProRule" id="PRU00521"/>
    </source>
</evidence>
<evidence type="ECO:0000255" key="4">
    <source>
        <dbReference type="RuleBase" id="RU000688"/>
    </source>
</evidence>
<evidence type="ECO:0000256" key="5">
    <source>
        <dbReference type="SAM" id="MobiDB-lite"/>
    </source>
</evidence>
<evidence type="ECO:0000269" key="6">
    <source>
    </source>
</evidence>
<evidence type="ECO:0000269" key="7">
    <source>
    </source>
</evidence>
<evidence type="ECO:0000303" key="8">
    <source>
    </source>
</evidence>
<evidence type="ECO:0000303" key="9">
    <source>
    </source>
</evidence>
<evidence type="ECO:0000305" key="10"/>
<evidence type="ECO:0000312" key="11">
    <source>
        <dbReference type="RGD" id="619891"/>
    </source>
</evidence>
<proteinExistence type="evidence at transcript level"/>
<accession>Q8VHD7</accession>
<gene>
    <name evidence="11" type="primary">Gpr83</name>
    <name evidence="9" type="synonym">Gir</name>
</gene>
<keyword id="KW-1003">Cell membrane</keyword>
<keyword id="KW-1015">Disulfide bond</keyword>
<keyword id="KW-0297">G-protein coupled receptor</keyword>
<keyword id="KW-0472">Membrane</keyword>
<keyword id="KW-0675">Receptor</keyword>
<keyword id="KW-1185">Reference proteome</keyword>
<keyword id="KW-0732">Signal</keyword>
<keyword id="KW-0807">Transducer</keyword>
<keyword id="KW-0812">Transmembrane</keyword>
<keyword id="KW-1133">Transmembrane helix</keyword>
<comment type="function">
    <text evidence="1">G-protein coupled receptor for PEN, a neuropeptide produced from the precursor protein, proSAAS (encoded by PCSK1N). Acts through a G(i)- and G(q)-alpha-alpha-mediated pathway in response to PEN. Plays a role in food intake and body weight regulation. May contribute to the regulation of anxiety-related behaviors.</text>
</comment>
<comment type="subcellular location">
    <subcellularLocation>
        <location evidence="1">Cell membrane</location>
        <topology evidence="2">Multi-pass membrane protein</topology>
    </subcellularLocation>
    <text evidence="1">Colocalizes with GPR171 in the paraventricular nucleus. Colocalizes with the ghrelin receptor GHSR1A in the hypothalamus.</text>
</comment>
<comment type="tissue specificity">
    <text evidence="6">Expressed preferentially in brain, and its neuronal expression is relegated to limbic brain regions, particularly in forebrain.</text>
</comment>
<comment type="induction">
    <text evidence="6">Increased in the prefrontal cortex of rat chronically treated with amphetamines.</text>
</comment>
<comment type="similarity">
    <text evidence="4">Belongs to the G-protein coupled receptor 1 family.</text>
</comment>
<comment type="caution">
    <text evidence="1 7">NPY has been reported to be a ligand for GPR83 (PubMed:17240481). However, a more recent study found that radiolabeled PEN binding to GPR83 is not affected by NPY concentrations below 1 mM, only very high, non-physiological concentrations causes a partial, displacement of PEN binding (By similarity).</text>
</comment>
<dbReference type="EMBL" id="AY029071">
    <property type="protein sequence ID" value="AAK29999.1"/>
    <property type="molecule type" value="mRNA"/>
</dbReference>
<dbReference type="EMBL" id="AC097778">
    <property type="status" value="NOT_ANNOTATED_CDS"/>
    <property type="molecule type" value="Genomic_DNA"/>
</dbReference>
<dbReference type="EMBL" id="CH473993">
    <property type="protein sequence ID" value="EDL78460.1"/>
    <property type="molecule type" value="Genomic_DNA"/>
</dbReference>
<dbReference type="RefSeq" id="NP_536336.1">
    <property type="nucleotide sequence ID" value="NM_080411.2"/>
</dbReference>
<dbReference type="SMR" id="Q8VHD7"/>
<dbReference type="FunCoup" id="Q8VHD7">
    <property type="interactions" value="306"/>
</dbReference>
<dbReference type="STRING" id="10116.ENSRNOP00000043707"/>
<dbReference type="GlyGen" id="Q8VHD7">
    <property type="glycosylation" value="1 site"/>
</dbReference>
<dbReference type="PhosphoSitePlus" id="Q8VHD7"/>
<dbReference type="PaxDb" id="10116-ENSRNOP00000043707"/>
<dbReference type="Ensembl" id="ENSRNOT00000044945.3">
    <property type="protein sequence ID" value="ENSRNOP00000043707.1"/>
    <property type="gene ID" value="ENSRNOG00000030318.4"/>
</dbReference>
<dbReference type="GeneID" id="140595"/>
<dbReference type="KEGG" id="rno:140595"/>
<dbReference type="UCSC" id="RGD:619891">
    <property type="organism name" value="rat"/>
</dbReference>
<dbReference type="AGR" id="RGD:619891"/>
<dbReference type="CTD" id="10888"/>
<dbReference type="RGD" id="619891">
    <property type="gene designation" value="Gpr83"/>
</dbReference>
<dbReference type="eggNOG" id="KOG3656">
    <property type="taxonomic scope" value="Eukaryota"/>
</dbReference>
<dbReference type="GeneTree" id="ENSGT00940000154336"/>
<dbReference type="HOGENOM" id="CLU_009579_6_1_1"/>
<dbReference type="InParanoid" id="Q8VHD7"/>
<dbReference type="OrthoDB" id="46750at9989"/>
<dbReference type="PhylomeDB" id="Q8VHD7"/>
<dbReference type="PRO" id="PR:Q8VHD7"/>
<dbReference type="Proteomes" id="UP000002494">
    <property type="component" value="Chromosome 8"/>
</dbReference>
<dbReference type="Proteomes" id="UP000234681">
    <property type="component" value="Chromosome 8"/>
</dbReference>
<dbReference type="Bgee" id="ENSRNOG00000030318">
    <property type="expression patterns" value="Expressed in frontal cortex and 5 other cell types or tissues"/>
</dbReference>
<dbReference type="GO" id="GO:0005929">
    <property type="term" value="C:cilium"/>
    <property type="evidence" value="ECO:0000266"/>
    <property type="project" value="RGD"/>
</dbReference>
<dbReference type="GO" id="GO:0097730">
    <property type="term" value="C:non-motile cilium"/>
    <property type="evidence" value="ECO:0000266"/>
    <property type="project" value="RGD"/>
</dbReference>
<dbReference type="GO" id="GO:0005886">
    <property type="term" value="C:plasma membrane"/>
    <property type="evidence" value="ECO:0000266"/>
    <property type="project" value="RGD"/>
</dbReference>
<dbReference type="GO" id="GO:0004930">
    <property type="term" value="F:G protein-coupled receptor activity"/>
    <property type="evidence" value="ECO:0000266"/>
    <property type="project" value="RGD"/>
</dbReference>
<dbReference type="GO" id="GO:0008188">
    <property type="term" value="F:neuropeptide receptor activity"/>
    <property type="evidence" value="ECO:0000266"/>
    <property type="project" value="RGD"/>
</dbReference>
<dbReference type="GO" id="GO:0004983">
    <property type="term" value="F:neuropeptide Y receptor activity"/>
    <property type="evidence" value="ECO:0007669"/>
    <property type="project" value="InterPro"/>
</dbReference>
<dbReference type="GO" id="GO:0007631">
    <property type="term" value="P:feeding behavior"/>
    <property type="evidence" value="ECO:0000266"/>
    <property type="project" value="RGD"/>
</dbReference>
<dbReference type="GO" id="GO:0007186">
    <property type="term" value="P:G protein-coupled receptor signaling pathway"/>
    <property type="evidence" value="ECO:0000266"/>
    <property type="project" value="RGD"/>
</dbReference>
<dbReference type="GO" id="GO:0007218">
    <property type="term" value="P:neuropeptide signaling pathway"/>
    <property type="evidence" value="ECO:0000266"/>
    <property type="project" value="RGD"/>
</dbReference>
<dbReference type="GO" id="GO:0007200">
    <property type="term" value="P:phospholipase C-activating G protein-coupled receptor signaling pathway"/>
    <property type="evidence" value="ECO:0000266"/>
    <property type="project" value="RGD"/>
</dbReference>
<dbReference type="GO" id="GO:0051384">
    <property type="term" value="P:response to glucocorticoid"/>
    <property type="evidence" value="ECO:0000266"/>
    <property type="project" value="RGD"/>
</dbReference>
<dbReference type="CDD" id="cd15389">
    <property type="entry name" value="7tmA_GPR83"/>
    <property type="match status" value="1"/>
</dbReference>
<dbReference type="FunFam" id="1.20.1070.10:FF:000191">
    <property type="entry name" value="Probable G-protein coupled receptor 83"/>
    <property type="match status" value="1"/>
</dbReference>
<dbReference type="Gene3D" id="1.20.1070.10">
    <property type="entry name" value="Rhodopsin 7-helix transmembrane proteins"/>
    <property type="match status" value="1"/>
</dbReference>
<dbReference type="InterPro" id="IPR000276">
    <property type="entry name" value="GPCR_Rhodpsn"/>
</dbReference>
<dbReference type="InterPro" id="IPR017452">
    <property type="entry name" value="GPCR_Rhodpsn_7TM"/>
</dbReference>
<dbReference type="InterPro" id="IPR000611">
    <property type="entry name" value="NPY_rcpt"/>
</dbReference>
<dbReference type="PANTHER" id="PTHR24238">
    <property type="entry name" value="G-PROTEIN COUPLED RECEPTOR"/>
    <property type="match status" value="1"/>
</dbReference>
<dbReference type="PANTHER" id="PTHR24238:SF57">
    <property type="entry name" value="G-PROTEIN COUPLED RECEPTOR 83"/>
    <property type="match status" value="1"/>
</dbReference>
<dbReference type="Pfam" id="PF00001">
    <property type="entry name" value="7tm_1"/>
    <property type="match status" value="1"/>
</dbReference>
<dbReference type="PRINTS" id="PR00237">
    <property type="entry name" value="GPCRRHODOPSN"/>
</dbReference>
<dbReference type="PRINTS" id="PR01012">
    <property type="entry name" value="NRPEPTIDEYR"/>
</dbReference>
<dbReference type="SMART" id="SM01381">
    <property type="entry name" value="7TM_GPCR_Srsx"/>
    <property type="match status" value="1"/>
</dbReference>
<dbReference type="SUPFAM" id="SSF81321">
    <property type="entry name" value="Family A G protein-coupled receptor-like"/>
    <property type="match status" value="1"/>
</dbReference>
<dbReference type="PROSITE" id="PS00237">
    <property type="entry name" value="G_PROTEIN_RECEP_F1_1"/>
    <property type="match status" value="1"/>
</dbReference>
<dbReference type="PROSITE" id="PS50262">
    <property type="entry name" value="G_PROTEIN_RECEP_F1_2"/>
    <property type="match status" value="1"/>
</dbReference>
<organism>
    <name type="scientific">Rattus norvegicus</name>
    <name type="common">Rat</name>
    <dbReference type="NCBI Taxonomy" id="10116"/>
    <lineage>
        <taxon>Eukaryota</taxon>
        <taxon>Metazoa</taxon>
        <taxon>Chordata</taxon>
        <taxon>Craniata</taxon>
        <taxon>Vertebrata</taxon>
        <taxon>Euteleostomi</taxon>
        <taxon>Mammalia</taxon>
        <taxon>Eutheria</taxon>
        <taxon>Euarchontoglires</taxon>
        <taxon>Glires</taxon>
        <taxon>Rodentia</taxon>
        <taxon>Myomorpha</taxon>
        <taxon>Muroidea</taxon>
        <taxon>Muridae</taxon>
        <taxon>Murinae</taxon>
        <taxon>Rattus</taxon>
    </lineage>
</organism>
<name>GPR83_RAT</name>